<comment type="catalytic activity">
    <reaction evidence="1">
        <text>aldehydo-D-galactose 6-phosphate = keto-D-tagatose 6-phosphate</text>
        <dbReference type="Rhea" id="RHEA:13033"/>
        <dbReference type="ChEBI" id="CHEBI:58255"/>
        <dbReference type="ChEBI" id="CHEBI:134283"/>
        <dbReference type="EC" id="5.3.1.26"/>
    </reaction>
</comment>
<comment type="pathway">
    <text evidence="1">Carbohydrate metabolism; D-galactose 6-phosphate degradation; D-tagatose 6-phosphate from D-galactose 6-phosphate: step 1/1.</text>
</comment>
<comment type="subunit">
    <text evidence="1">Heteromultimeric protein consisting of LacA and LacB.</text>
</comment>
<comment type="similarity">
    <text evidence="1">Belongs to the LacAB/RpiB family.</text>
</comment>
<feature type="chain" id="PRO_1000068922" description="Galactose-6-phosphate isomerase subunit LacA">
    <location>
        <begin position="1"/>
        <end position="142"/>
    </location>
</feature>
<proteinExistence type="inferred from homology"/>
<organism>
    <name type="scientific">Staphylococcus aureus (strain USA300)</name>
    <dbReference type="NCBI Taxonomy" id="367830"/>
    <lineage>
        <taxon>Bacteria</taxon>
        <taxon>Bacillati</taxon>
        <taxon>Bacillota</taxon>
        <taxon>Bacilli</taxon>
        <taxon>Bacillales</taxon>
        <taxon>Staphylococcaceae</taxon>
        <taxon>Staphylococcus</taxon>
    </lineage>
</organism>
<name>LACA_STAA3</name>
<reference key="1">
    <citation type="journal article" date="2006" name="Lancet">
        <title>Complete genome sequence of USA300, an epidemic clone of community-acquired meticillin-resistant Staphylococcus aureus.</title>
        <authorList>
            <person name="Diep B.A."/>
            <person name="Gill S.R."/>
            <person name="Chang R.F."/>
            <person name="Phan T.H."/>
            <person name="Chen J.H."/>
            <person name="Davidson M.G."/>
            <person name="Lin F."/>
            <person name="Lin J."/>
            <person name="Carleton H.A."/>
            <person name="Mongodin E.F."/>
            <person name="Sensabaugh G.F."/>
            <person name="Perdreau-Remington F."/>
        </authorList>
    </citation>
    <scope>NUCLEOTIDE SEQUENCE [LARGE SCALE GENOMIC DNA]</scope>
    <source>
        <strain>USA300</strain>
    </source>
</reference>
<evidence type="ECO:0000255" key="1">
    <source>
        <dbReference type="HAMAP-Rule" id="MF_01555"/>
    </source>
</evidence>
<dbReference type="EC" id="5.3.1.26" evidence="1"/>
<dbReference type="EMBL" id="CP000255">
    <property type="protein sequence ID" value="ABD21643.1"/>
    <property type="molecule type" value="Genomic_DNA"/>
</dbReference>
<dbReference type="RefSeq" id="WP_000974608.1">
    <property type="nucleotide sequence ID" value="NZ_CP027476.1"/>
</dbReference>
<dbReference type="SMR" id="Q2FET7"/>
<dbReference type="GeneID" id="98347039"/>
<dbReference type="KEGG" id="saa:SAUSA300_2155"/>
<dbReference type="HOGENOM" id="CLU_091396_4_2_9"/>
<dbReference type="OMA" id="WNKDVAE"/>
<dbReference type="UniPathway" id="UPA00702">
    <property type="reaction ID" value="UER00714"/>
</dbReference>
<dbReference type="Proteomes" id="UP000001939">
    <property type="component" value="Chromosome"/>
</dbReference>
<dbReference type="GO" id="GO:0050044">
    <property type="term" value="F:galactose-6-phosphate isomerase activity"/>
    <property type="evidence" value="ECO:0007669"/>
    <property type="project" value="UniProtKB-UniRule"/>
</dbReference>
<dbReference type="GO" id="GO:0004751">
    <property type="term" value="F:ribose-5-phosphate isomerase activity"/>
    <property type="evidence" value="ECO:0007669"/>
    <property type="project" value="TreeGrafter"/>
</dbReference>
<dbReference type="GO" id="GO:0019316">
    <property type="term" value="P:D-allose catabolic process"/>
    <property type="evidence" value="ECO:0007669"/>
    <property type="project" value="TreeGrafter"/>
</dbReference>
<dbReference type="GO" id="GO:0019388">
    <property type="term" value="P:galactose catabolic process"/>
    <property type="evidence" value="ECO:0007669"/>
    <property type="project" value="UniProtKB-UniPathway"/>
</dbReference>
<dbReference type="GO" id="GO:0019512">
    <property type="term" value="P:lactose catabolic process via tagatose-6-phosphate"/>
    <property type="evidence" value="ECO:0007669"/>
    <property type="project" value="UniProtKB-UniRule"/>
</dbReference>
<dbReference type="GO" id="GO:0009052">
    <property type="term" value="P:pentose-phosphate shunt, non-oxidative branch"/>
    <property type="evidence" value="ECO:0007669"/>
    <property type="project" value="TreeGrafter"/>
</dbReference>
<dbReference type="Gene3D" id="3.40.1400.10">
    <property type="entry name" value="Sugar-phosphate isomerase, RpiB/LacA/LacB"/>
    <property type="match status" value="1"/>
</dbReference>
<dbReference type="HAMAP" id="MF_01555">
    <property type="entry name" value="LacA"/>
    <property type="match status" value="1"/>
</dbReference>
<dbReference type="InterPro" id="IPR004783">
    <property type="entry name" value="LacA"/>
</dbReference>
<dbReference type="InterPro" id="IPR003500">
    <property type="entry name" value="RpiB_LacA_LacB"/>
</dbReference>
<dbReference type="InterPro" id="IPR036569">
    <property type="entry name" value="RpiB_LacA_LacB_sf"/>
</dbReference>
<dbReference type="NCBIfam" id="TIGR01118">
    <property type="entry name" value="lacA"/>
    <property type="match status" value="1"/>
</dbReference>
<dbReference type="NCBIfam" id="NF006380">
    <property type="entry name" value="PRK08621.1"/>
    <property type="match status" value="1"/>
</dbReference>
<dbReference type="NCBIfam" id="TIGR00689">
    <property type="entry name" value="rpiB_lacA_lacB"/>
    <property type="match status" value="1"/>
</dbReference>
<dbReference type="PANTHER" id="PTHR30345:SF5">
    <property type="entry name" value="GALACTOSE-6-PHOSPHATE ISOMERASE SUBUNIT LACA"/>
    <property type="match status" value="1"/>
</dbReference>
<dbReference type="PANTHER" id="PTHR30345">
    <property type="entry name" value="RIBOSE-5-PHOSPHATE ISOMERASE B"/>
    <property type="match status" value="1"/>
</dbReference>
<dbReference type="Pfam" id="PF02502">
    <property type="entry name" value="LacAB_rpiB"/>
    <property type="match status" value="1"/>
</dbReference>
<dbReference type="PIRSF" id="PIRSF005384">
    <property type="entry name" value="RpiB_LacA_B"/>
    <property type="match status" value="1"/>
</dbReference>
<dbReference type="SUPFAM" id="SSF89623">
    <property type="entry name" value="Ribose/Galactose isomerase RpiB/AlsB"/>
    <property type="match status" value="1"/>
</dbReference>
<accession>Q2FET7</accession>
<keyword id="KW-0413">Isomerase</keyword>
<keyword id="KW-0423">Lactose metabolism</keyword>
<protein>
    <recommendedName>
        <fullName evidence="1">Galactose-6-phosphate isomerase subunit LacA</fullName>
        <ecNumber evidence="1">5.3.1.26</ecNumber>
    </recommendedName>
</protein>
<sequence>MAIIIGSDEAGKRLKEVIKSYLLDNKYDVVDVTEGQEVDFVDATLAVAKDVQSQEGNLGIVIDAFGAGSFMVATKIKGMIAAEVSDERSGYMTRGHNNSRMITMGSEIVGDTLAKNVVKGFVEGKYDGGRHQIRVDMLNKMC</sequence>
<gene>
    <name evidence="1" type="primary">lacA</name>
    <name type="ordered locus">SAUSA300_2155</name>
</gene>